<evidence type="ECO:0000255" key="1">
    <source>
        <dbReference type="HAMAP-Rule" id="MF_00020"/>
    </source>
</evidence>
<feature type="chain" id="PRO_1000201909" description="Acetate kinase">
    <location>
        <begin position="1"/>
        <end position="399"/>
    </location>
</feature>
<feature type="active site" description="Proton donor/acceptor" evidence="1">
    <location>
        <position position="146"/>
    </location>
</feature>
<feature type="binding site" evidence="1">
    <location>
        <position position="8"/>
    </location>
    <ligand>
        <name>Mg(2+)</name>
        <dbReference type="ChEBI" id="CHEBI:18420"/>
    </ligand>
</feature>
<feature type="binding site" evidence="1">
    <location>
        <position position="15"/>
    </location>
    <ligand>
        <name>ATP</name>
        <dbReference type="ChEBI" id="CHEBI:30616"/>
    </ligand>
</feature>
<feature type="binding site" evidence="1">
    <location>
        <position position="89"/>
    </location>
    <ligand>
        <name>substrate</name>
    </ligand>
</feature>
<feature type="binding site" evidence="1">
    <location>
        <begin position="206"/>
        <end position="210"/>
    </location>
    <ligand>
        <name>ATP</name>
        <dbReference type="ChEBI" id="CHEBI:30616"/>
    </ligand>
</feature>
<feature type="binding site" evidence="1">
    <location>
        <begin position="283"/>
        <end position="285"/>
    </location>
    <ligand>
        <name>ATP</name>
        <dbReference type="ChEBI" id="CHEBI:30616"/>
    </ligand>
</feature>
<feature type="binding site" evidence="1">
    <location>
        <begin position="331"/>
        <end position="335"/>
    </location>
    <ligand>
        <name>ATP</name>
        <dbReference type="ChEBI" id="CHEBI:30616"/>
    </ligand>
</feature>
<feature type="binding site" evidence="1">
    <location>
        <position position="383"/>
    </location>
    <ligand>
        <name>Mg(2+)</name>
        <dbReference type="ChEBI" id="CHEBI:18420"/>
    </ligand>
</feature>
<feature type="site" description="Transition state stabilizer" evidence="1">
    <location>
        <position position="178"/>
    </location>
</feature>
<feature type="site" description="Transition state stabilizer" evidence="1">
    <location>
        <position position="239"/>
    </location>
</feature>
<reference key="1">
    <citation type="journal article" date="2009" name="PLoS Pathog.">
        <title>Genomic evidence for the evolution of Streptococcus equi: host restriction, increased virulence, and genetic exchange with human pathogens.</title>
        <authorList>
            <person name="Holden M.T.G."/>
            <person name="Heather Z."/>
            <person name="Paillot R."/>
            <person name="Steward K.F."/>
            <person name="Webb K."/>
            <person name="Ainslie F."/>
            <person name="Jourdan T."/>
            <person name="Bason N.C."/>
            <person name="Holroyd N.E."/>
            <person name="Mungall K."/>
            <person name="Quail M.A."/>
            <person name="Sanders M."/>
            <person name="Simmonds M."/>
            <person name="Willey D."/>
            <person name="Brooks K."/>
            <person name="Aanensen D.M."/>
            <person name="Spratt B.G."/>
            <person name="Jolley K.A."/>
            <person name="Maiden M.C.J."/>
            <person name="Kehoe M."/>
            <person name="Chanter N."/>
            <person name="Bentley S.D."/>
            <person name="Robinson C."/>
            <person name="Maskell D.J."/>
            <person name="Parkhill J."/>
            <person name="Waller A.S."/>
        </authorList>
    </citation>
    <scope>NUCLEOTIDE SEQUENCE [LARGE SCALE GENOMIC DNA]</scope>
    <source>
        <strain>H70</strain>
    </source>
</reference>
<name>ACKA_STRS7</name>
<organism>
    <name type="scientific">Streptococcus equi subsp. zooepidemicus (strain H70)</name>
    <dbReference type="NCBI Taxonomy" id="553483"/>
    <lineage>
        <taxon>Bacteria</taxon>
        <taxon>Bacillati</taxon>
        <taxon>Bacillota</taxon>
        <taxon>Bacilli</taxon>
        <taxon>Lactobacillales</taxon>
        <taxon>Streptococcaceae</taxon>
        <taxon>Streptococcus</taxon>
    </lineage>
</organism>
<sequence length="399" mass="43583">MSKTIAINAGSSSLKWQLYQMPEEKVLAQGIIERIGLTDSISTVKYDGKKEEHILDIPDHTEAVKRLLNDLIHFGIIGTYDEITGVGHRIVAGGEYFKESVVVDDKVVEQVEELAALAPLHNPGAAAGIRAFRKILPDITSVCVFDTSFHTTMQKHTYLYPIPQKYYTDYKVRKYGAHGTSHKYVAEEAAKMLGRPLDELKLITAHVGNGVSITANYHGQSVDTSMGFTPLAGPMMGTRSGDIDPAIIPYLIAQDPELKDAADVVNMLNKQSGLGGVSGISSDMRDIEAGLQANNPDAVLAYNIFIDRIKKFIGQYFAVLNGADALVFTAGMGENAPLMRQDVVNGLSWFGMEIDPEKNVFGYRGDISTAASKVKVLVVSTDEELCIARDVERLKQTIS</sequence>
<proteinExistence type="inferred from homology"/>
<comment type="function">
    <text evidence="1">Catalyzes the formation of acetyl phosphate from acetate and ATP. Can also catalyze the reverse reaction.</text>
</comment>
<comment type="catalytic activity">
    <reaction evidence="1">
        <text>acetate + ATP = acetyl phosphate + ADP</text>
        <dbReference type="Rhea" id="RHEA:11352"/>
        <dbReference type="ChEBI" id="CHEBI:22191"/>
        <dbReference type="ChEBI" id="CHEBI:30089"/>
        <dbReference type="ChEBI" id="CHEBI:30616"/>
        <dbReference type="ChEBI" id="CHEBI:456216"/>
        <dbReference type="EC" id="2.7.2.1"/>
    </reaction>
</comment>
<comment type="cofactor">
    <cofactor evidence="1">
        <name>Mg(2+)</name>
        <dbReference type="ChEBI" id="CHEBI:18420"/>
    </cofactor>
    <cofactor evidence="1">
        <name>Mn(2+)</name>
        <dbReference type="ChEBI" id="CHEBI:29035"/>
    </cofactor>
    <text evidence="1">Mg(2+). Can also accept Mn(2+).</text>
</comment>
<comment type="pathway">
    <text evidence="1">Metabolic intermediate biosynthesis; acetyl-CoA biosynthesis; acetyl-CoA from acetate: step 1/2.</text>
</comment>
<comment type="subunit">
    <text evidence="1">Homodimer.</text>
</comment>
<comment type="subcellular location">
    <subcellularLocation>
        <location evidence="1">Cytoplasm</location>
    </subcellularLocation>
</comment>
<comment type="similarity">
    <text evidence="1">Belongs to the acetokinase family.</text>
</comment>
<gene>
    <name evidence="1" type="primary">ackA</name>
    <name type="ordered locus">SZO_01070</name>
</gene>
<accession>C0MEF7</accession>
<keyword id="KW-0067">ATP-binding</keyword>
<keyword id="KW-0963">Cytoplasm</keyword>
<keyword id="KW-0418">Kinase</keyword>
<keyword id="KW-0460">Magnesium</keyword>
<keyword id="KW-0479">Metal-binding</keyword>
<keyword id="KW-0547">Nucleotide-binding</keyword>
<keyword id="KW-0808">Transferase</keyword>
<protein>
    <recommendedName>
        <fullName evidence="1">Acetate kinase</fullName>
        <ecNumber evidence="1">2.7.2.1</ecNumber>
    </recommendedName>
    <alternativeName>
        <fullName evidence="1">Acetokinase</fullName>
    </alternativeName>
</protein>
<dbReference type="EC" id="2.7.2.1" evidence="1"/>
<dbReference type="EMBL" id="FM204884">
    <property type="protein sequence ID" value="CAW97747.1"/>
    <property type="molecule type" value="Genomic_DNA"/>
</dbReference>
<dbReference type="SMR" id="C0MEF7"/>
<dbReference type="KEGG" id="seq:SZO_01070"/>
<dbReference type="eggNOG" id="COG0282">
    <property type="taxonomic scope" value="Bacteria"/>
</dbReference>
<dbReference type="HOGENOM" id="CLU_020352_0_1_9"/>
<dbReference type="UniPathway" id="UPA00340">
    <property type="reaction ID" value="UER00458"/>
</dbReference>
<dbReference type="Proteomes" id="UP000001368">
    <property type="component" value="Chromosome"/>
</dbReference>
<dbReference type="GO" id="GO:0005737">
    <property type="term" value="C:cytoplasm"/>
    <property type="evidence" value="ECO:0007669"/>
    <property type="project" value="UniProtKB-SubCell"/>
</dbReference>
<dbReference type="GO" id="GO:0008776">
    <property type="term" value="F:acetate kinase activity"/>
    <property type="evidence" value="ECO:0007669"/>
    <property type="project" value="UniProtKB-UniRule"/>
</dbReference>
<dbReference type="GO" id="GO:0005524">
    <property type="term" value="F:ATP binding"/>
    <property type="evidence" value="ECO:0007669"/>
    <property type="project" value="UniProtKB-KW"/>
</dbReference>
<dbReference type="GO" id="GO:0000287">
    <property type="term" value="F:magnesium ion binding"/>
    <property type="evidence" value="ECO:0007669"/>
    <property type="project" value="UniProtKB-UniRule"/>
</dbReference>
<dbReference type="GO" id="GO:0006083">
    <property type="term" value="P:acetate metabolic process"/>
    <property type="evidence" value="ECO:0007669"/>
    <property type="project" value="TreeGrafter"/>
</dbReference>
<dbReference type="GO" id="GO:0006085">
    <property type="term" value="P:acetyl-CoA biosynthetic process"/>
    <property type="evidence" value="ECO:0007669"/>
    <property type="project" value="UniProtKB-UniRule"/>
</dbReference>
<dbReference type="CDD" id="cd24010">
    <property type="entry name" value="ASKHA_NBD_AcK_PK"/>
    <property type="match status" value="1"/>
</dbReference>
<dbReference type="Gene3D" id="3.30.420.40">
    <property type="match status" value="2"/>
</dbReference>
<dbReference type="HAMAP" id="MF_00020">
    <property type="entry name" value="Acetate_kinase"/>
    <property type="match status" value="1"/>
</dbReference>
<dbReference type="InterPro" id="IPR004372">
    <property type="entry name" value="Ac/propionate_kinase"/>
</dbReference>
<dbReference type="InterPro" id="IPR000890">
    <property type="entry name" value="Aliphatic_acid_kin_short-chain"/>
</dbReference>
<dbReference type="InterPro" id="IPR023865">
    <property type="entry name" value="Aliphatic_acid_kinase_CS"/>
</dbReference>
<dbReference type="InterPro" id="IPR043129">
    <property type="entry name" value="ATPase_NBD"/>
</dbReference>
<dbReference type="NCBIfam" id="TIGR00016">
    <property type="entry name" value="ackA"/>
    <property type="match status" value="1"/>
</dbReference>
<dbReference type="PANTHER" id="PTHR21060">
    <property type="entry name" value="ACETATE KINASE"/>
    <property type="match status" value="1"/>
</dbReference>
<dbReference type="PANTHER" id="PTHR21060:SF15">
    <property type="entry name" value="ACETATE KINASE-RELATED"/>
    <property type="match status" value="1"/>
</dbReference>
<dbReference type="Pfam" id="PF00871">
    <property type="entry name" value="Acetate_kinase"/>
    <property type="match status" value="1"/>
</dbReference>
<dbReference type="PIRSF" id="PIRSF000722">
    <property type="entry name" value="Acetate_prop_kin"/>
    <property type="match status" value="1"/>
</dbReference>
<dbReference type="PRINTS" id="PR00471">
    <property type="entry name" value="ACETATEKNASE"/>
</dbReference>
<dbReference type="SUPFAM" id="SSF53067">
    <property type="entry name" value="Actin-like ATPase domain"/>
    <property type="match status" value="2"/>
</dbReference>
<dbReference type="PROSITE" id="PS01075">
    <property type="entry name" value="ACETATE_KINASE_1"/>
    <property type="match status" value="1"/>
</dbReference>
<dbReference type="PROSITE" id="PS01076">
    <property type="entry name" value="ACETATE_KINASE_2"/>
    <property type="match status" value="1"/>
</dbReference>